<gene>
    <name evidence="1" type="primary">acpS</name>
    <name type="ordered locus">SSPA0273</name>
</gene>
<proteinExistence type="inferred from homology"/>
<accession>B5BAT4</accession>
<comment type="function">
    <text evidence="1">Transfers the 4'-phosphopantetheine moiety from coenzyme A to a Ser of acyl-carrier-protein.</text>
</comment>
<comment type="catalytic activity">
    <reaction evidence="1">
        <text>apo-[ACP] + CoA = holo-[ACP] + adenosine 3',5'-bisphosphate + H(+)</text>
        <dbReference type="Rhea" id="RHEA:12068"/>
        <dbReference type="Rhea" id="RHEA-COMP:9685"/>
        <dbReference type="Rhea" id="RHEA-COMP:9690"/>
        <dbReference type="ChEBI" id="CHEBI:15378"/>
        <dbReference type="ChEBI" id="CHEBI:29999"/>
        <dbReference type="ChEBI" id="CHEBI:57287"/>
        <dbReference type="ChEBI" id="CHEBI:58343"/>
        <dbReference type="ChEBI" id="CHEBI:64479"/>
        <dbReference type="EC" id="2.7.8.7"/>
    </reaction>
</comment>
<comment type="cofactor">
    <cofactor evidence="1">
        <name>Mg(2+)</name>
        <dbReference type="ChEBI" id="CHEBI:18420"/>
    </cofactor>
</comment>
<comment type="subcellular location">
    <subcellularLocation>
        <location evidence="1">Cytoplasm</location>
    </subcellularLocation>
</comment>
<comment type="similarity">
    <text evidence="1">Belongs to the P-Pant transferase superfamily. AcpS family.</text>
</comment>
<evidence type="ECO:0000255" key="1">
    <source>
        <dbReference type="HAMAP-Rule" id="MF_00101"/>
    </source>
</evidence>
<reference key="1">
    <citation type="journal article" date="2009" name="BMC Genomics">
        <title>Pseudogene accumulation in the evolutionary histories of Salmonella enterica serovars Paratyphi A and Typhi.</title>
        <authorList>
            <person name="Holt K.E."/>
            <person name="Thomson N.R."/>
            <person name="Wain J."/>
            <person name="Langridge G.C."/>
            <person name="Hasan R."/>
            <person name="Bhutta Z.A."/>
            <person name="Quail M.A."/>
            <person name="Norbertczak H."/>
            <person name="Walker D."/>
            <person name="Simmonds M."/>
            <person name="White B."/>
            <person name="Bason N."/>
            <person name="Mungall K."/>
            <person name="Dougan G."/>
            <person name="Parkhill J."/>
        </authorList>
    </citation>
    <scope>NUCLEOTIDE SEQUENCE [LARGE SCALE GENOMIC DNA]</scope>
    <source>
        <strain>AKU_12601</strain>
    </source>
</reference>
<name>ACPS_SALPK</name>
<dbReference type="EC" id="2.7.8.7" evidence="1"/>
<dbReference type="EMBL" id="FM200053">
    <property type="protein sequence ID" value="CAR58388.1"/>
    <property type="molecule type" value="Genomic_DNA"/>
</dbReference>
<dbReference type="RefSeq" id="WP_000986043.1">
    <property type="nucleotide sequence ID" value="NC_011147.1"/>
</dbReference>
<dbReference type="SMR" id="B5BAT4"/>
<dbReference type="GeneID" id="66757004"/>
<dbReference type="KEGG" id="sek:SSPA0273"/>
<dbReference type="HOGENOM" id="CLU_089696_3_1_6"/>
<dbReference type="Proteomes" id="UP000001869">
    <property type="component" value="Chromosome"/>
</dbReference>
<dbReference type="GO" id="GO:0005737">
    <property type="term" value="C:cytoplasm"/>
    <property type="evidence" value="ECO:0007669"/>
    <property type="project" value="UniProtKB-SubCell"/>
</dbReference>
<dbReference type="GO" id="GO:0008897">
    <property type="term" value="F:holo-[acyl-carrier-protein] synthase activity"/>
    <property type="evidence" value="ECO:0007669"/>
    <property type="project" value="UniProtKB-UniRule"/>
</dbReference>
<dbReference type="GO" id="GO:0000287">
    <property type="term" value="F:magnesium ion binding"/>
    <property type="evidence" value="ECO:0007669"/>
    <property type="project" value="UniProtKB-UniRule"/>
</dbReference>
<dbReference type="GO" id="GO:0006633">
    <property type="term" value="P:fatty acid biosynthetic process"/>
    <property type="evidence" value="ECO:0007669"/>
    <property type="project" value="UniProtKB-UniRule"/>
</dbReference>
<dbReference type="FunFam" id="3.90.470.20:FF:000001">
    <property type="entry name" value="Holo-[acyl-carrier-protein] synthase"/>
    <property type="match status" value="1"/>
</dbReference>
<dbReference type="Gene3D" id="3.90.470.20">
    <property type="entry name" value="4'-phosphopantetheinyl transferase domain"/>
    <property type="match status" value="1"/>
</dbReference>
<dbReference type="HAMAP" id="MF_00101">
    <property type="entry name" value="AcpS"/>
    <property type="match status" value="1"/>
</dbReference>
<dbReference type="InterPro" id="IPR008278">
    <property type="entry name" value="4-PPantetheinyl_Trfase_dom"/>
</dbReference>
<dbReference type="InterPro" id="IPR037143">
    <property type="entry name" value="4-PPantetheinyl_Trfase_dom_sf"/>
</dbReference>
<dbReference type="InterPro" id="IPR002582">
    <property type="entry name" value="ACPS"/>
</dbReference>
<dbReference type="InterPro" id="IPR004568">
    <property type="entry name" value="Ppantetheine-prot_Trfase_dom"/>
</dbReference>
<dbReference type="NCBIfam" id="TIGR00516">
    <property type="entry name" value="acpS"/>
    <property type="match status" value="1"/>
</dbReference>
<dbReference type="NCBIfam" id="TIGR00556">
    <property type="entry name" value="pantethn_trn"/>
    <property type="match status" value="1"/>
</dbReference>
<dbReference type="Pfam" id="PF01648">
    <property type="entry name" value="ACPS"/>
    <property type="match status" value="1"/>
</dbReference>
<dbReference type="SUPFAM" id="SSF56214">
    <property type="entry name" value="4'-phosphopantetheinyl transferase"/>
    <property type="match status" value="1"/>
</dbReference>
<feature type="chain" id="PRO_1000093916" description="Holo-[acyl-carrier-protein] synthase">
    <location>
        <begin position="1"/>
        <end position="126"/>
    </location>
</feature>
<feature type="binding site" evidence="1">
    <location>
        <position position="9"/>
    </location>
    <ligand>
        <name>Mg(2+)</name>
        <dbReference type="ChEBI" id="CHEBI:18420"/>
    </ligand>
</feature>
<feature type="binding site" evidence="1">
    <location>
        <position position="58"/>
    </location>
    <ligand>
        <name>Mg(2+)</name>
        <dbReference type="ChEBI" id="CHEBI:18420"/>
    </ligand>
</feature>
<sequence length="126" mass="14070">MAILGLGTDIVEIARIEAVISRSGERLARRVLSDNEWAIWETHQQPVRFLAKRFAVKEAAAKAFGTGIRNGLAFNQFEVFNDELGKPRLRLWGEALTLAEKLGVAHMHVTLADERHYACATVILES</sequence>
<protein>
    <recommendedName>
        <fullName evidence="1">Holo-[acyl-carrier-protein] synthase</fullName>
        <shortName evidence="1">Holo-ACP synthase</shortName>
        <ecNumber evidence="1">2.7.8.7</ecNumber>
    </recommendedName>
    <alternativeName>
        <fullName evidence="1">4'-phosphopantetheinyl transferase AcpS</fullName>
    </alternativeName>
</protein>
<organism>
    <name type="scientific">Salmonella paratyphi A (strain AKU_12601)</name>
    <dbReference type="NCBI Taxonomy" id="554290"/>
    <lineage>
        <taxon>Bacteria</taxon>
        <taxon>Pseudomonadati</taxon>
        <taxon>Pseudomonadota</taxon>
        <taxon>Gammaproteobacteria</taxon>
        <taxon>Enterobacterales</taxon>
        <taxon>Enterobacteriaceae</taxon>
        <taxon>Salmonella</taxon>
    </lineage>
</organism>
<keyword id="KW-0963">Cytoplasm</keyword>
<keyword id="KW-0275">Fatty acid biosynthesis</keyword>
<keyword id="KW-0276">Fatty acid metabolism</keyword>
<keyword id="KW-0444">Lipid biosynthesis</keyword>
<keyword id="KW-0443">Lipid metabolism</keyword>
<keyword id="KW-0460">Magnesium</keyword>
<keyword id="KW-0479">Metal-binding</keyword>
<keyword id="KW-0808">Transferase</keyword>